<protein>
    <recommendedName>
        <fullName>Protein S100-A11</fullName>
    </recommendedName>
    <alternativeName>
        <fullName>Calgizzarin</fullName>
    </alternativeName>
    <alternativeName>
        <fullName>Endothelial monocyte-activating polypeptide</fullName>
        <shortName>EMAP</shortName>
    </alternativeName>
    <alternativeName>
        <fullName>Protein S100-C</fullName>
    </alternativeName>
    <alternativeName>
        <fullName>S100 calcium-binding protein A11</fullName>
    </alternativeName>
</protein>
<gene>
    <name type="primary">S100a11</name>
    <name type="synonym">S100c</name>
</gene>
<dbReference type="EMBL" id="U41341">
    <property type="protein sequence ID" value="AAA85181.1"/>
    <property type="molecule type" value="mRNA"/>
</dbReference>
<dbReference type="EMBL" id="AK002490">
    <property type="protein sequence ID" value="BAB22139.1"/>
    <property type="molecule type" value="mRNA"/>
</dbReference>
<dbReference type="EMBL" id="AK003889">
    <property type="protein sequence ID" value="BAB23059.1"/>
    <property type="molecule type" value="mRNA"/>
</dbReference>
<dbReference type="EMBL" id="AK164352">
    <property type="protein sequence ID" value="BAE37754.1"/>
    <property type="molecule type" value="mRNA"/>
</dbReference>
<dbReference type="EMBL" id="BC021916">
    <property type="protein sequence ID" value="AAH21916.1"/>
    <property type="molecule type" value="mRNA"/>
</dbReference>
<dbReference type="EMBL" id="BC086903">
    <property type="protein sequence ID" value="AAH86903.1"/>
    <property type="molecule type" value="mRNA"/>
</dbReference>
<dbReference type="CCDS" id="CCDS38525.1"/>
<dbReference type="RefSeq" id="NP_058020.1">
    <property type="nucleotide sequence ID" value="NM_016740.3"/>
</dbReference>
<dbReference type="SMR" id="P50543"/>
<dbReference type="BioGRID" id="203050">
    <property type="interactions" value="14"/>
</dbReference>
<dbReference type="FunCoup" id="P50543">
    <property type="interactions" value="474"/>
</dbReference>
<dbReference type="IntAct" id="P50543">
    <property type="interactions" value="3"/>
</dbReference>
<dbReference type="MINT" id="P50543"/>
<dbReference type="STRING" id="10090.ENSMUSP00000029515"/>
<dbReference type="iPTMnet" id="P50543"/>
<dbReference type="PhosphoSitePlus" id="P50543"/>
<dbReference type="SwissPalm" id="P50543"/>
<dbReference type="CPTAC" id="non-CPTAC-3343"/>
<dbReference type="jPOST" id="P50543"/>
<dbReference type="PaxDb" id="10090-ENSMUSP00000029515"/>
<dbReference type="PeptideAtlas" id="P50543"/>
<dbReference type="ProteomicsDB" id="256858"/>
<dbReference type="Pumba" id="P50543"/>
<dbReference type="TopDownProteomics" id="P50543"/>
<dbReference type="Antibodypedia" id="20339">
    <property type="antibodies" value="457 antibodies from 35 providers"/>
</dbReference>
<dbReference type="DNASU" id="20195"/>
<dbReference type="Ensembl" id="ENSMUST00000029515.5">
    <property type="protein sequence ID" value="ENSMUSP00000029515.5"/>
    <property type="gene ID" value="ENSMUSG00000027907.5"/>
</dbReference>
<dbReference type="GeneID" id="20195"/>
<dbReference type="KEGG" id="mmu:20195"/>
<dbReference type="UCSC" id="uc008qfj.1">
    <property type="organism name" value="mouse"/>
</dbReference>
<dbReference type="AGR" id="MGI:1338798"/>
<dbReference type="CTD" id="6282"/>
<dbReference type="MGI" id="MGI:1338798">
    <property type="gene designation" value="S100a11"/>
</dbReference>
<dbReference type="VEuPathDB" id="HostDB:ENSMUSG00000027907"/>
<dbReference type="eggNOG" id="ENOG502SS6H">
    <property type="taxonomic scope" value="Eukaryota"/>
</dbReference>
<dbReference type="GeneTree" id="ENSGT00940000154172"/>
<dbReference type="HOGENOM" id="CLU_138624_1_0_1"/>
<dbReference type="InParanoid" id="P50543"/>
<dbReference type="OMA" id="MACEKCY"/>
<dbReference type="OrthoDB" id="9451669at2759"/>
<dbReference type="PhylomeDB" id="P50543"/>
<dbReference type="TreeFam" id="TF332727"/>
<dbReference type="Reactome" id="R-MMU-6798695">
    <property type="pathway name" value="Neutrophil degranulation"/>
</dbReference>
<dbReference type="BioGRID-ORCS" id="20195">
    <property type="hits" value="5 hits in 59 CRISPR screens"/>
</dbReference>
<dbReference type="ChiTaRS" id="S100a11">
    <property type="organism name" value="mouse"/>
</dbReference>
<dbReference type="PRO" id="PR:P50543"/>
<dbReference type="Proteomes" id="UP000000589">
    <property type="component" value="Chromosome 3"/>
</dbReference>
<dbReference type="RNAct" id="P50543">
    <property type="molecule type" value="protein"/>
</dbReference>
<dbReference type="Bgee" id="ENSMUSG00000027907">
    <property type="expression patterns" value="Expressed in granulocyte and 68 other cell types or tissues"/>
</dbReference>
<dbReference type="GO" id="GO:0062023">
    <property type="term" value="C:collagen-containing extracellular matrix"/>
    <property type="evidence" value="ECO:0007005"/>
    <property type="project" value="BHF-UCL"/>
</dbReference>
<dbReference type="GO" id="GO:0005737">
    <property type="term" value="C:cytoplasm"/>
    <property type="evidence" value="ECO:0000314"/>
    <property type="project" value="MGI"/>
</dbReference>
<dbReference type="GO" id="GO:0005634">
    <property type="term" value="C:nucleus"/>
    <property type="evidence" value="ECO:0007669"/>
    <property type="project" value="UniProtKB-SubCell"/>
</dbReference>
<dbReference type="GO" id="GO:0001726">
    <property type="term" value="C:ruffle"/>
    <property type="evidence" value="ECO:0007669"/>
    <property type="project" value="Ensembl"/>
</dbReference>
<dbReference type="GO" id="GO:0005509">
    <property type="term" value="F:calcium ion binding"/>
    <property type="evidence" value="ECO:0007669"/>
    <property type="project" value="InterPro"/>
</dbReference>
<dbReference type="GO" id="GO:0048306">
    <property type="term" value="F:calcium-dependent protein binding"/>
    <property type="evidence" value="ECO:0007669"/>
    <property type="project" value="Ensembl"/>
</dbReference>
<dbReference type="GO" id="GO:0042803">
    <property type="term" value="F:protein homodimerization activity"/>
    <property type="evidence" value="ECO:0007669"/>
    <property type="project" value="Ensembl"/>
</dbReference>
<dbReference type="GO" id="GO:0044548">
    <property type="term" value="F:S100 protein binding"/>
    <property type="evidence" value="ECO:0007669"/>
    <property type="project" value="Ensembl"/>
</dbReference>
<dbReference type="GO" id="GO:0014911">
    <property type="term" value="P:positive regulation of smooth muscle cell migration"/>
    <property type="evidence" value="ECO:0007669"/>
    <property type="project" value="Ensembl"/>
</dbReference>
<dbReference type="GO" id="GO:0042127">
    <property type="term" value="P:regulation of cell population proliferation"/>
    <property type="evidence" value="ECO:0007669"/>
    <property type="project" value="InterPro"/>
</dbReference>
<dbReference type="CDD" id="cd05023">
    <property type="entry name" value="S-100A11"/>
    <property type="match status" value="1"/>
</dbReference>
<dbReference type="FunFam" id="1.10.238.10:FF:000188">
    <property type="entry name" value="Protein S100"/>
    <property type="match status" value="1"/>
</dbReference>
<dbReference type="Gene3D" id="1.10.238.10">
    <property type="entry name" value="EF-hand"/>
    <property type="match status" value="1"/>
</dbReference>
<dbReference type="InterPro" id="IPR011992">
    <property type="entry name" value="EF-hand-dom_pair"/>
</dbReference>
<dbReference type="InterPro" id="IPR018247">
    <property type="entry name" value="EF_Hand_1_Ca_BS"/>
</dbReference>
<dbReference type="InterPro" id="IPR002048">
    <property type="entry name" value="EF_hand_dom"/>
</dbReference>
<dbReference type="InterPro" id="IPR001751">
    <property type="entry name" value="S100/CaBP7/8-like_CS"/>
</dbReference>
<dbReference type="InterPro" id="IPR013787">
    <property type="entry name" value="S100_Ca-bd_sub"/>
</dbReference>
<dbReference type="InterPro" id="IPR028482">
    <property type="entry name" value="S100A11"/>
</dbReference>
<dbReference type="PANTHER" id="PTHR11639:SF60">
    <property type="entry name" value="PROTEIN S100-A11"/>
    <property type="match status" value="1"/>
</dbReference>
<dbReference type="PANTHER" id="PTHR11639">
    <property type="entry name" value="S100 CALCIUM-BINDING PROTEIN"/>
    <property type="match status" value="1"/>
</dbReference>
<dbReference type="Pfam" id="PF00036">
    <property type="entry name" value="EF-hand_1"/>
    <property type="match status" value="1"/>
</dbReference>
<dbReference type="Pfam" id="PF01023">
    <property type="entry name" value="S_100"/>
    <property type="match status" value="1"/>
</dbReference>
<dbReference type="SMART" id="SM00054">
    <property type="entry name" value="EFh"/>
    <property type="match status" value="1"/>
</dbReference>
<dbReference type="SMART" id="SM01394">
    <property type="entry name" value="S_100"/>
    <property type="match status" value="1"/>
</dbReference>
<dbReference type="SUPFAM" id="SSF47473">
    <property type="entry name" value="EF-hand"/>
    <property type="match status" value="1"/>
</dbReference>
<dbReference type="PROSITE" id="PS00018">
    <property type="entry name" value="EF_HAND_1"/>
    <property type="match status" value="1"/>
</dbReference>
<dbReference type="PROSITE" id="PS50222">
    <property type="entry name" value="EF_HAND_2"/>
    <property type="match status" value="2"/>
</dbReference>
<dbReference type="PROSITE" id="PS00303">
    <property type="entry name" value="S100_CABP"/>
    <property type="match status" value="1"/>
</dbReference>
<accession>P50543</accession>
<accession>Q545S1</accession>
<comment type="function">
    <text evidence="1">Facilitates the differentiation and the cornification of keratinocytes.</text>
</comment>
<comment type="subunit">
    <text evidence="1">Homodimer; disulfide-linked.</text>
</comment>
<comment type="subcellular location">
    <subcellularLocation>
        <location>Cytoplasm</location>
    </subcellularLocation>
    <subcellularLocation>
        <location evidence="1">Nucleus</location>
    </subcellularLocation>
</comment>
<comment type="PTM">
    <text evidence="1">Phosphorylation at Thr-5 significantly suppresses homodimerization and promotes association with NCL/nucleolin which induces nuclear translocation.</text>
</comment>
<comment type="miscellaneous">
    <text evidence="1">Binds two calcium ions per molecule with an affinity similar to that of the S100 proteins.</text>
</comment>
<comment type="similarity">
    <text evidence="4">Belongs to the S-100 family.</text>
</comment>
<reference key="1">
    <citation type="submission" date="1996-01" db="EMBL/GenBank/DDBJ databases">
        <authorList>
            <person name="Fan Y."/>
            <person name="Leung D."/>
            <person name="Houck K.A."/>
            <person name="Yan S."/>
            <person name="Brett J."/>
            <person name="Heath M."/>
            <person name="Pan Y."/>
            <person name="Clauss M."/>
            <person name="Kisiel W."/>
            <person name="Chabot J."/>
            <person name="Logerfo P."/>
            <person name="Stern D."/>
            <person name="Kao J."/>
        </authorList>
    </citation>
    <scope>NUCLEOTIDE SEQUENCE [MRNA]</scope>
</reference>
<reference key="2">
    <citation type="journal article" date="2005" name="Science">
        <title>The transcriptional landscape of the mammalian genome.</title>
        <authorList>
            <person name="Carninci P."/>
            <person name="Kasukawa T."/>
            <person name="Katayama S."/>
            <person name="Gough J."/>
            <person name="Frith M.C."/>
            <person name="Maeda N."/>
            <person name="Oyama R."/>
            <person name="Ravasi T."/>
            <person name="Lenhard B."/>
            <person name="Wells C."/>
            <person name="Kodzius R."/>
            <person name="Shimokawa K."/>
            <person name="Bajic V.B."/>
            <person name="Brenner S.E."/>
            <person name="Batalov S."/>
            <person name="Forrest A.R."/>
            <person name="Zavolan M."/>
            <person name="Davis M.J."/>
            <person name="Wilming L.G."/>
            <person name="Aidinis V."/>
            <person name="Allen J.E."/>
            <person name="Ambesi-Impiombato A."/>
            <person name="Apweiler R."/>
            <person name="Aturaliya R.N."/>
            <person name="Bailey T.L."/>
            <person name="Bansal M."/>
            <person name="Baxter L."/>
            <person name="Beisel K.W."/>
            <person name="Bersano T."/>
            <person name="Bono H."/>
            <person name="Chalk A.M."/>
            <person name="Chiu K.P."/>
            <person name="Choudhary V."/>
            <person name="Christoffels A."/>
            <person name="Clutterbuck D.R."/>
            <person name="Crowe M.L."/>
            <person name="Dalla E."/>
            <person name="Dalrymple B.P."/>
            <person name="de Bono B."/>
            <person name="Della Gatta G."/>
            <person name="di Bernardo D."/>
            <person name="Down T."/>
            <person name="Engstrom P."/>
            <person name="Fagiolini M."/>
            <person name="Faulkner G."/>
            <person name="Fletcher C.F."/>
            <person name="Fukushima T."/>
            <person name="Furuno M."/>
            <person name="Futaki S."/>
            <person name="Gariboldi M."/>
            <person name="Georgii-Hemming P."/>
            <person name="Gingeras T.R."/>
            <person name="Gojobori T."/>
            <person name="Green R.E."/>
            <person name="Gustincich S."/>
            <person name="Harbers M."/>
            <person name="Hayashi Y."/>
            <person name="Hensch T.K."/>
            <person name="Hirokawa N."/>
            <person name="Hill D."/>
            <person name="Huminiecki L."/>
            <person name="Iacono M."/>
            <person name="Ikeo K."/>
            <person name="Iwama A."/>
            <person name="Ishikawa T."/>
            <person name="Jakt M."/>
            <person name="Kanapin A."/>
            <person name="Katoh M."/>
            <person name="Kawasawa Y."/>
            <person name="Kelso J."/>
            <person name="Kitamura H."/>
            <person name="Kitano H."/>
            <person name="Kollias G."/>
            <person name="Krishnan S.P."/>
            <person name="Kruger A."/>
            <person name="Kummerfeld S.K."/>
            <person name="Kurochkin I.V."/>
            <person name="Lareau L.F."/>
            <person name="Lazarevic D."/>
            <person name="Lipovich L."/>
            <person name="Liu J."/>
            <person name="Liuni S."/>
            <person name="McWilliam S."/>
            <person name="Madan Babu M."/>
            <person name="Madera M."/>
            <person name="Marchionni L."/>
            <person name="Matsuda H."/>
            <person name="Matsuzawa S."/>
            <person name="Miki H."/>
            <person name="Mignone F."/>
            <person name="Miyake S."/>
            <person name="Morris K."/>
            <person name="Mottagui-Tabar S."/>
            <person name="Mulder N."/>
            <person name="Nakano N."/>
            <person name="Nakauchi H."/>
            <person name="Ng P."/>
            <person name="Nilsson R."/>
            <person name="Nishiguchi S."/>
            <person name="Nishikawa S."/>
            <person name="Nori F."/>
            <person name="Ohara O."/>
            <person name="Okazaki Y."/>
            <person name="Orlando V."/>
            <person name="Pang K.C."/>
            <person name="Pavan W.J."/>
            <person name="Pavesi G."/>
            <person name="Pesole G."/>
            <person name="Petrovsky N."/>
            <person name="Piazza S."/>
            <person name="Reed J."/>
            <person name="Reid J.F."/>
            <person name="Ring B.Z."/>
            <person name="Ringwald M."/>
            <person name="Rost B."/>
            <person name="Ruan Y."/>
            <person name="Salzberg S.L."/>
            <person name="Sandelin A."/>
            <person name="Schneider C."/>
            <person name="Schoenbach C."/>
            <person name="Sekiguchi K."/>
            <person name="Semple C.A."/>
            <person name="Seno S."/>
            <person name="Sessa L."/>
            <person name="Sheng Y."/>
            <person name="Shibata Y."/>
            <person name="Shimada H."/>
            <person name="Shimada K."/>
            <person name="Silva D."/>
            <person name="Sinclair B."/>
            <person name="Sperling S."/>
            <person name="Stupka E."/>
            <person name="Sugiura K."/>
            <person name="Sultana R."/>
            <person name="Takenaka Y."/>
            <person name="Taki K."/>
            <person name="Tammoja K."/>
            <person name="Tan S.L."/>
            <person name="Tang S."/>
            <person name="Taylor M.S."/>
            <person name="Tegner J."/>
            <person name="Teichmann S.A."/>
            <person name="Ueda H.R."/>
            <person name="van Nimwegen E."/>
            <person name="Verardo R."/>
            <person name="Wei C.L."/>
            <person name="Yagi K."/>
            <person name="Yamanishi H."/>
            <person name="Zabarovsky E."/>
            <person name="Zhu S."/>
            <person name="Zimmer A."/>
            <person name="Hide W."/>
            <person name="Bult C."/>
            <person name="Grimmond S.M."/>
            <person name="Teasdale R.D."/>
            <person name="Liu E.T."/>
            <person name="Brusic V."/>
            <person name="Quackenbush J."/>
            <person name="Wahlestedt C."/>
            <person name="Mattick J.S."/>
            <person name="Hume D.A."/>
            <person name="Kai C."/>
            <person name="Sasaki D."/>
            <person name="Tomaru Y."/>
            <person name="Fukuda S."/>
            <person name="Kanamori-Katayama M."/>
            <person name="Suzuki M."/>
            <person name="Aoki J."/>
            <person name="Arakawa T."/>
            <person name="Iida J."/>
            <person name="Imamura K."/>
            <person name="Itoh M."/>
            <person name="Kato T."/>
            <person name="Kawaji H."/>
            <person name="Kawagashira N."/>
            <person name="Kawashima T."/>
            <person name="Kojima M."/>
            <person name="Kondo S."/>
            <person name="Konno H."/>
            <person name="Nakano K."/>
            <person name="Ninomiya N."/>
            <person name="Nishio T."/>
            <person name="Okada M."/>
            <person name="Plessy C."/>
            <person name="Shibata K."/>
            <person name="Shiraki T."/>
            <person name="Suzuki S."/>
            <person name="Tagami M."/>
            <person name="Waki K."/>
            <person name="Watahiki A."/>
            <person name="Okamura-Oho Y."/>
            <person name="Suzuki H."/>
            <person name="Kawai J."/>
            <person name="Hayashizaki Y."/>
        </authorList>
    </citation>
    <scope>NUCLEOTIDE SEQUENCE [LARGE SCALE MRNA]</scope>
    <source>
        <strain>C57BL/6J</strain>
        <tissue>Kidney</tissue>
        <tissue>Spinal ganglion</tissue>
    </source>
</reference>
<reference key="3">
    <citation type="journal article" date="2004" name="Genome Res.">
        <title>The status, quality, and expansion of the NIH full-length cDNA project: the Mammalian Gene Collection (MGC).</title>
        <authorList>
            <consortium name="The MGC Project Team"/>
        </authorList>
    </citation>
    <scope>NUCLEOTIDE SEQUENCE [LARGE SCALE MRNA]</scope>
    <source>
        <strain>FVB/N</strain>
        <tissue>Kidney</tissue>
        <tissue>Salivary gland</tissue>
    </source>
</reference>
<reference key="4">
    <citation type="journal article" date="2010" name="Cell">
        <title>A tissue-specific atlas of mouse protein phosphorylation and expression.</title>
        <authorList>
            <person name="Huttlin E.L."/>
            <person name="Jedrychowski M.P."/>
            <person name="Elias J.E."/>
            <person name="Goswami T."/>
            <person name="Rad R."/>
            <person name="Beausoleil S.A."/>
            <person name="Villen J."/>
            <person name="Haas W."/>
            <person name="Sowa M.E."/>
            <person name="Gygi S.P."/>
        </authorList>
    </citation>
    <scope>IDENTIFICATION BY MASS SPECTROMETRY [LARGE SCALE ANALYSIS]</scope>
    <source>
        <tissue>Brown adipose tissue</tissue>
        <tissue>Heart</tissue>
        <tissue>Kidney</tissue>
        <tissue>Liver</tissue>
        <tissue>Lung</tissue>
        <tissue>Pancreas</tissue>
        <tissue>Spleen</tissue>
        <tissue>Testis</tissue>
    </source>
</reference>
<reference key="5">
    <citation type="journal article" date="2013" name="Mol. Cell">
        <title>SIRT5-mediated lysine desuccinylation impacts diverse metabolic pathways.</title>
        <authorList>
            <person name="Park J."/>
            <person name="Chen Y."/>
            <person name="Tishkoff D.X."/>
            <person name="Peng C."/>
            <person name="Tan M."/>
            <person name="Dai L."/>
            <person name="Xie Z."/>
            <person name="Zhang Y."/>
            <person name="Zwaans B.M."/>
            <person name="Skinner M.E."/>
            <person name="Lombard D.B."/>
            <person name="Zhao Y."/>
        </authorList>
    </citation>
    <scope>ACETYLATION [LARGE SCALE ANALYSIS] AT LYS-22</scope>
    <scope>IDENTIFICATION BY MASS SPECTROMETRY [LARGE SCALE ANALYSIS]</scope>
    <source>
        <tissue>Embryonic fibroblast</tissue>
    </source>
</reference>
<proteinExistence type="evidence at protein level"/>
<keyword id="KW-0007">Acetylation</keyword>
<keyword id="KW-0106">Calcium</keyword>
<keyword id="KW-0963">Cytoplasm</keyword>
<keyword id="KW-1015">Disulfide bond</keyword>
<keyword id="KW-0479">Metal-binding</keyword>
<keyword id="KW-0539">Nucleus</keyword>
<keyword id="KW-0597">Phosphoprotein</keyword>
<keyword id="KW-1185">Reference proteome</keyword>
<keyword id="KW-0677">Repeat</keyword>
<name>S10AB_MOUSE</name>
<sequence>MPTETERCIESLIAVFQKYSGKDGNNTQLSKTEFLSFMNTELAAFTKNQKDPGVLDRMMKKLDLNCDGQLDFQEFLNLIGGLAIACHDSFIQTSQKRI</sequence>
<evidence type="ECO:0000250" key="1"/>
<evidence type="ECO:0000250" key="2">
    <source>
        <dbReference type="UniProtKB" id="P31949"/>
    </source>
</evidence>
<evidence type="ECO:0000255" key="3">
    <source>
        <dbReference type="PROSITE-ProRule" id="PRU00448"/>
    </source>
</evidence>
<evidence type="ECO:0000305" key="4"/>
<evidence type="ECO:0007744" key="5">
    <source>
    </source>
</evidence>
<organism>
    <name type="scientific">Mus musculus</name>
    <name type="common">Mouse</name>
    <dbReference type="NCBI Taxonomy" id="10090"/>
    <lineage>
        <taxon>Eukaryota</taxon>
        <taxon>Metazoa</taxon>
        <taxon>Chordata</taxon>
        <taxon>Craniata</taxon>
        <taxon>Vertebrata</taxon>
        <taxon>Euteleostomi</taxon>
        <taxon>Mammalia</taxon>
        <taxon>Eutheria</taxon>
        <taxon>Euarchontoglires</taxon>
        <taxon>Glires</taxon>
        <taxon>Rodentia</taxon>
        <taxon>Myomorpha</taxon>
        <taxon>Muroidea</taxon>
        <taxon>Muridae</taxon>
        <taxon>Murinae</taxon>
        <taxon>Mus</taxon>
        <taxon>Mus</taxon>
    </lineage>
</organism>
<feature type="chain" id="PRO_0000144010" description="Protein S100-A11">
    <location>
        <begin position="1"/>
        <end position="98"/>
    </location>
</feature>
<feature type="domain" description="EF-hand 1" evidence="3">
    <location>
        <begin position="8"/>
        <end position="44"/>
    </location>
</feature>
<feature type="domain" description="EF-hand 2" evidence="3">
    <location>
        <begin position="50"/>
        <end position="85"/>
    </location>
</feature>
<feature type="binding site" evidence="4">
    <location>
        <position position="26"/>
    </location>
    <ligand>
        <name>Ca(2+)</name>
        <dbReference type="ChEBI" id="CHEBI:29108"/>
        <label>1</label>
        <note>low affinity</note>
    </ligand>
</feature>
<feature type="binding site" evidence="4">
    <location>
        <position position="28"/>
    </location>
    <ligand>
        <name>Ca(2+)</name>
        <dbReference type="ChEBI" id="CHEBI:29108"/>
        <label>1</label>
        <note>low affinity</note>
    </ligand>
</feature>
<feature type="binding site" evidence="4">
    <location>
        <position position="33"/>
    </location>
    <ligand>
        <name>Ca(2+)</name>
        <dbReference type="ChEBI" id="CHEBI:29108"/>
        <label>1</label>
        <note>low affinity</note>
    </ligand>
</feature>
<feature type="binding site" evidence="3">
    <location>
        <position position="63"/>
    </location>
    <ligand>
        <name>Ca(2+)</name>
        <dbReference type="ChEBI" id="CHEBI:29108"/>
        <label>2</label>
        <note>high affinity</note>
    </ligand>
</feature>
<feature type="binding site" evidence="3">
    <location>
        <position position="65"/>
    </location>
    <ligand>
        <name>Ca(2+)</name>
        <dbReference type="ChEBI" id="CHEBI:29108"/>
        <label>2</label>
        <note>high affinity</note>
    </ligand>
</feature>
<feature type="binding site" evidence="3">
    <location>
        <position position="67"/>
    </location>
    <ligand>
        <name>Ca(2+)</name>
        <dbReference type="ChEBI" id="CHEBI:29108"/>
        <label>2</label>
        <note>high affinity</note>
    </ligand>
</feature>
<feature type="binding site" evidence="3">
    <location>
        <position position="69"/>
    </location>
    <ligand>
        <name>Ca(2+)</name>
        <dbReference type="ChEBI" id="CHEBI:29108"/>
        <label>2</label>
        <note>high affinity</note>
    </ligand>
</feature>
<feature type="binding site" evidence="3">
    <location>
        <position position="74"/>
    </location>
    <ligand>
        <name>Ca(2+)</name>
        <dbReference type="ChEBI" id="CHEBI:29108"/>
        <label>2</label>
        <note>high affinity</note>
    </ligand>
</feature>
<feature type="modified residue" description="Phosphothreonine" evidence="2">
    <location>
        <position position="5"/>
    </location>
</feature>
<feature type="modified residue" description="N6-acetyllysine" evidence="5">
    <location>
        <position position="22"/>
    </location>
</feature>
<feature type="disulfide bond" description="Interchain" evidence="1">
    <location>
        <position position="8"/>
    </location>
</feature>